<comment type="function">
    <text evidence="1">Catalyzes the transfer of a dimethylallyl group onto the adenine at position 37 in tRNAs that read codons beginning with uridine, leading to the formation of N6-(dimethylallyl)adenosine (i(6)A).</text>
</comment>
<comment type="catalytic activity">
    <reaction evidence="1">
        <text>adenosine(37) in tRNA + dimethylallyl diphosphate = N(6)-dimethylallyladenosine(37) in tRNA + diphosphate</text>
        <dbReference type="Rhea" id="RHEA:26482"/>
        <dbReference type="Rhea" id="RHEA-COMP:10162"/>
        <dbReference type="Rhea" id="RHEA-COMP:10375"/>
        <dbReference type="ChEBI" id="CHEBI:33019"/>
        <dbReference type="ChEBI" id="CHEBI:57623"/>
        <dbReference type="ChEBI" id="CHEBI:74411"/>
        <dbReference type="ChEBI" id="CHEBI:74415"/>
        <dbReference type="EC" id="2.5.1.75"/>
    </reaction>
</comment>
<comment type="cofactor">
    <cofactor evidence="1">
        <name>Mg(2+)</name>
        <dbReference type="ChEBI" id="CHEBI:18420"/>
    </cofactor>
</comment>
<comment type="subunit">
    <text evidence="1">Monomer.</text>
</comment>
<comment type="similarity">
    <text evidence="1">Belongs to the IPP transferase family.</text>
</comment>
<sequence>MSEDAVKNAILIAGPTASGKSALAIRMAKATGGFIVNTDSMQVYGVLDLLTARPSRADLAEAEHFLYGHVPPSSTYSTGKWFEDVEALLGRCELQGRVPIFVGGTGLYFRALLGGLSQMPEVSAQVRDHWRGRMEAEGAKALHAVLCVRDPAIAAALQPSDSQRIVRALEVLESTGKSLLEWQKVKGRALVDDQSAQKIVLRPDRAWLGERIARRFSAMWAEGAIDEVRALLALDLDPALPAMKAIGVREVSAFLAETMSREEAIERSVIATRQYAKRQSTWFRNQLGEDWRVYASGEEVFQGGSFRDPQ</sequence>
<gene>
    <name evidence="1" type="primary">miaA</name>
    <name type="ordered locus">BOV_1347</name>
</gene>
<reference key="1">
    <citation type="journal article" date="2009" name="PLoS ONE">
        <title>Genome degradation in Brucella ovis corresponds with narrowing of its host range and tissue tropism.</title>
        <authorList>
            <person name="Tsolis R.M."/>
            <person name="Seshadri R."/>
            <person name="Santos R.L."/>
            <person name="Sangari F.J."/>
            <person name="Lobo J.M."/>
            <person name="de Jong M.F."/>
            <person name="Ren Q."/>
            <person name="Myers G."/>
            <person name="Brinkac L.M."/>
            <person name="Nelson W.C."/>
            <person name="Deboy R.T."/>
            <person name="Angiuoli S."/>
            <person name="Khouri H."/>
            <person name="Dimitrov G."/>
            <person name="Robinson J.R."/>
            <person name="Mulligan S."/>
            <person name="Walker R.L."/>
            <person name="Elzer P.E."/>
            <person name="Hassan K.A."/>
            <person name="Paulsen I.T."/>
        </authorList>
    </citation>
    <scope>NUCLEOTIDE SEQUENCE [LARGE SCALE GENOMIC DNA]</scope>
    <source>
        <strain>ATCC 25840 / 63/290 / NCTC 10512</strain>
    </source>
</reference>
<organism>
    <name type="scientific">Brucella ovis (strain ATCC 25840 / 63/290 / NCTC 10512)</name>
    <dbReference type="NCBI Taxonomy" id="444178"/>
    <lineage>
        <taxon>Bacteria</taxon>
        <taxon>Pseudomonadati</taxon>
        <taxon>Pseudomonadota</taxon>
        <taxon>Alphaproteobacteria</taxon>
        <taxon>Hyphomicrobiales</taxon>
        <taxon>Brucellaceae</taxon>
        <taxon>Brucella/Ochrobactrum group</taxon>
        <taxon>Brucella</taxon>
    </lineage>
</organism>
<name>MIAA_BRUO2</name>
<dbReference type="EC" id="2.5.1.75" evidence="1"/>
<dbReference type="EMBL" id="CP000708">
    <property type="protein sequence ID" value="ABQ61652.1"/>
    <property type="molecule type" value="Genomic_DNA"/>
</dbReference>
<dbReference type="RefSeq" id="WP_004688534.1">
    <property type="nucleotide sequence ID" value="NC_009505.1"/>
</dbReference>
<dbReference type="SMR" id="A5VRD9"/>
<dbReference type="GeneID" id="97533398"/>
<dbReference type="KEGG" id="bov:BOV_1347"/>
<dbReference type="HOGENOM" id="CLU_032616_0_1_5"/>
<dbReference type="PhylomeDB" id="A5VRD9"/>
<dbReference type="PRO" id="PR:A5VRD9"/>
<dbReference type="Proteomes" id="UP000006383">
    <property type="component" value="Chromosome I"/>
</dbReference>
<dbReference type="GO" id="GO:0005524">
    <property type="term" value="F:ATP binding"/>
    <property type="evidence" value="ECO:0007669"/>
    <property type="project" value="UniProtKB-UniRule"/>
</dbReference>
<dbReference type="GO" id="GO:0052381">
    <property type="term" value="F:tRNA dimethylallyltransferase activity"/>
    <property type="evidence" value="ECO:0007669"/>
    <property type="project" value="UniProtKB-UniRule"/>
</dbReference>
<dbReference type="GO" id="GO:0006400">
    <property type="term" value="P:tRNA modification"/>
    <property type="evidence" value="ECO:0007669"/>
    <property type="project" value="TreeGrafter"/>
</dbReference>
<dbReference type="Gene3D" id="1.10.20.140">
    <property type="match status" value="1"/>
</dbReference>
<dbReference type="Gene3D" id="3.40.50.300">
    <property type="entry name" value="P-loop containing nucleotide triphosphate hydrolases"/>
    <property type="match status" value="1"/>
</dbReference>
<dbReference type="HAMAP" id="MF_00185">
    <property type="entry name" value="IPP_trans"/>
    <property type="match status" value="1"/>
</dbReference>
<dbReference type="InterPro" id="IPR039657">
    <property type="entry name" value="Dimethylallyltransferase"/>
</dbReference>
<dbReference type="InterPro" id="IPR018022">
    <property type="entry name" value="IPT"/>
</dbReference>
<dbReference type="InterPro" id="IPR027417">
    <property type="entry name" value="P-loop_NTPase"/>
</dbReference>
<dbReference type="NCBIfam" id="TIGR00174">
    <property type="entry name" value="miaA"/>
    <property type="match status" value="1"/>
</dbReference>
<dbReference type="PANTHER" id="PTHR11088">
    <property type="entry name" value="TRNA DIMETHYLALLYLTRANSFERASE"/>
    <property type="match status" value="1"/>
</dbReference>
<dbReference type="PANTHER" id="PTHR11088:SF60">
    <property type="entry name" value="TRNA DIMETHYLALLYLTRANSFERASE"/>
    <property type="match status" value="1"/>
</dbReference>
<dbReference type="Pfam" id="PF01715">
    <property type="entry name" value="IPPT"/>
    <property type="match status" value="1"/>
</dbReference>
<dbReference type="SUPFAM" id="SSF52540">
    <property type="entry name" value="P-loop containing nucleoside triphosphate hydrolases"/>
    <property type="match status" value="2"/>
</dbReference>
<feature type="chain" id="PRO_1000020569" description="tRNA dimethylallyltransferase">
    <location>
        <begin position="1"/>
        <end position="310"/>
    </location>
</feature>
<feature type="region of interest" description="Interaction with substrate tRNA" evidence="1">
    <location>
        <begin position="39"/>
        <end position="42"/>
    </location>
</feature>
<feature type="region of interest" description="Interaction with substrate tRNA" evidence="1">
    <location>
        <begin position="163"/>
        <end position="167"/>
    </location>
</feature>
<feature type="binding site" evidence="1">
    <location>
        <begin position="14"/>
        <end position="21"/>
    </location>
    <ligand>
        <name>ATP</name>
        <dbReference type="ChEBI" id="CHEBI:30616"/>
    </ligand>
</feature>
<feature type="binding site" evidence="1">
    <location>
        <begin position="16"/>
        <end position="21"/>
    </location>
    <ligand>
        <name>substrate</name>
    </ligand>
</feature>
<feature type="site" description="Interaction with substrate tRNA" evidence="1">
    <location>
        <position position="105"/>
    </location>
</feature>
<feature type="site" description="Interaction with substrate tRNA" evidence="1">
    <location>
        <position position="127"/>
    </location>
</feature>
<evidence type="ECO:0000255" key="1">
    <source>
        <dbReference type="HAMAP-Rule" id="MF_00185"/>
    </source>
</evidence>
<proteinExistence type="inferred from homology"/>
<keyword id="KW-0067">ATP-binding</keyword>
<keyword id="KW-0460">Magnesium</keyword>
<keyword id="KW-0547">Nucleotide-binding</keyword>
<keyword id="KW-0808">Transferase</keyword>
<keyword id="KW-0819">tRNA processing</keyword>
<protein>
    <recommendedName>
        <fullName evidence="1">tRNA dimethylallyltransferase</fullName>
        <ecNumber evidence="1">2.5.1.75</ecNumber>
    </recommendedName>
    <alternativeName>
        <fullName evidence="1">Dimethylallyl diphosphate:tRNA dimethylallyltransferase</fullName>
        <shortName evidence="1">DMAPP:tRNA dimethylallyltransferase</shortName>
        <shortName evidence="1">DMATase</shortName>
    </alternativeName>
    <alternativeName>
        <fullName evidence="1">Isopentenyl-diphosphate:tRNA isopentenyltransferase</fullName>
        <shortName evidence="1">IPP transferase</shortName>
        <shortName evidence="1">IPPT</shortName>
        <shortName evidence="1">IPTase</shortName>
    </alternativeName>
</protein>
<accession>A5VRD9</accession>